<dbReference type="EC" id="3.4.21.-"/>
<dbReference type="EMBL" id="AJ005203">
    <property type="protein sequence ID" value="CAA06441.1"/>
    <property type="molecule type" value="mRNA"/>
</dbReference>
<dbReference type="PDB" id="1BIY">
    <property type="method" value="X-ray"/>
    <property type="resolution" value="3.37 A"/>
    <property type="chains" value="A=20-708"/>
</dbReference>
<dbReference type="PDB" id="1CE2">
    <property type="method" value="X-ray"/>
    <property type="resolution" value="2.50 A"/>
    <property type="chains" value="A=20-708"/>
</dbReference>
<dbReference type="PDBsum" id="1BIY"/>
<dbReference type="PDBsum" id="1CE2"/>
<dbReference type="BMRB" id="O77698"/>
<dbReference type="SMR" id="O77698"/>
<dbReference type="MEROPS" id="S60.001"/>
<dbReference type="MEROPS" id="S60.970"/>
<dbReference type="GlyCosmos" id="O77698">
    <property type="glycosylation" value="4 sites, No reported glycans"/>
</dbReference>
<dbReference type="EvolutionaryTrace" id="O77698"/>
<dbReference type="GO" id="GO:0005769">
    <property type="term" value="C:early endosome"/>
    <property type="evidence" value="ECO:0007669"/>
    <property type="project" value="TreeGrafter"/>
</dbReference>
<dbReference type="GO" id="GO:0005615">
    <property type="term" value="C:extracellular space"/>
    <property type="evidence" value="ECO:0007669"/>
    <property type="project" value="InterPro"/>
</dbReference>
<dbReference type="GO" id="GO:0005886">
    <property type="term" value="C:plasma membrane"/>
    <property type="evidence" value="ECO:0007669"/>
    <property type="project" value="TreeGrafter"/>
</dbReference>
<dbReference type="GO" id="GO:0055037">
    <property type="term" value="C:recycling endosome"/>
    <property type="evidence" value="ECO:0007669"/>
    <property type="project" value="TreeGrafter"/>
</dbReference>
<dbReference type="GO" id="GO:0042581">
    <property type="term" value="C:specific granule"/>
    <property type="evidence" value="ECO:0000250"/>
    <property type="project" value="UniProtKB"/>
</dbReference>
<dbReference type="GO" id="GO:0005506">
    <property type="term" value="F:iron ion binding"/>
    <property type="evidence" value="ECO:0007669"/>
    <property type="project" value="InterPro"/>
</dbReference>
<dbReference type="GO" id="GO:0004252">
    <property type="term" value="F:serine-type endopeptidase activity"/>
    <property type="evidence" value="ECO:0007669"/>
    <property type="project" value="InterPro"/>
</dbReference>
<dbReference type="GO" id="GO:0019731">
    <property type="term" value="P:antibacterial humoral response"/>
    <property type="evidence" value="ECO:0000250"/>
    <property type="project" value="UniProtKB"/>
</dbReference>
<dbReference type="GO" id="GO:0019732">
    <property type="term" value="P:antifungal humoral response"/>
    <property type="evidence" value="ECO:0000250"/>
    <property type="project" value="UniProtKB"/>
</dbReference>
<dbReference type="GO" id="GO:0060349">
    <property type="term" value="P:bone morphogenesis"/>
    <property type="evidence" value="ECO:0000250"/>
    <property type="project" value="UniProtKB"/>
</dbReference>
<dbReference type="GO" id="GO:0002227">
    <property type="term" value="P:innate immune response in mucosa"/>
    <property type="evidence" value="ECO:0000250"/>
    <property type="project" value="UniProtKB"/>
</dbReference>
<dbReference type="GO" id="GO:0006826">
    <property type="term" value="P:iron ion transport"/>
    <property type="evidence" value="ECO:0007669"/>
    <property type="project" value="UniProtKB-KW"/>
</dbReference>
<dbReference type="GO" id="GO:0043066">
    <property type="term" value="P:negative regulation of apoptotic process"/>
    <property type="evidence" value="ECO:0000250"/>
    <property type="project" value="UniProtKB"/>
</dbReference>
<dbReference type="GO" id="GO:0031665">
    <property type="term" value="P:negative regulation of lipopolysaccharide-mediated signaling pathway"/>
    <property type="evidence" value="ECO:0000250"/>
    <property type="project" value="UniProtKB"/>
</dbReference>
<dbReference type="GO" id="GO:2001205">
    <property type="term" value="P:negative regulation of osteoclast development"/>
    <property type="evidence" value="ECO:0000250"/>
    <property type="project" value="UniProtKB"/>
</dbReference>
<dbReference type="GO" id="GO:1900229">
    <property type="term" value="P:negative regulation of single-species biofilm formation in or on host organism"/>
    <property type="evidence" value="ECO:0000250"/>
    <property type="project" value="UniProtKB"/>
</dbReference>
<dbReference type="GO" id="GO:2000308">
    <property type="term" value="P:negative regulation of tumor necrosis factor (ligand) superfamily member 11 production"/>
    <property type="evidence" value="ECO:0000250"/>
    <property type="project" value="UniProtKB"/>
</dbReference>
<dbReference type="GO" id="GO:0001503">
    <property type="term" value="P:ossification"/>
    <property type="evidence" value="ECO:0007669"/>
    <property type="project" value="UniProtKB-KW"/>
</dbReference>
<dbReference type="GO" id="GO:1900159">
    <property type="term" value="P:positive regulation of bone mineralization involved in bone maturation"/>
    <property type="evidence" value="ECO:0000250"/>
    <property type="project" value="UniProtKB"/>
</dbReference>
<dbReference type="GO" id="GO:1902732">
    <property type="term" value="P:positive regulation of chondrocyte proliferation"/>
    <property type="evidence" value="ECO:0000250"/>
    <property type="project" value="UniProtKB"/>
</dbReference>
<dbReference type="GO" id="GO:0045669">
    <property type="term" value="P:positive regulation of osteoblast differentiation"/>
    <property type="evidence" value="ECO:0000250"/>
    <property type="project" value="UniProtKB"/>
</dbReference>
<dbReference type="GO" id="GO:0033690">
    <property type="term" value="P:positive regulation of osteoblast proliferation"/>
    <property type="evidence" value="ECO:0000250"/>
    <property type="project" value="UniProtKB"/>
</dbReference>
<dbReference type="GO" id="GO:0006508">
    <property type="term" value="P:proteolysis"/>
    <property type="evidence" value="ECO:0007669"/>
    <property type="project" value="UniProtKB-KW"/>
</dbReference>
<dbReference type="GO" id="GO:0001817">
    <property type="term" value="P:regulation of cytokine production"/>
    <property type="evidence" value="ECO:0000250"/>
    <property type="project" value="UniProtKB"/>
</dbReference>
<dbReference type="GO" id="GO:0032680">
    <property type="term" value="P:regulation of tumor necrosis factor production"/>
    <property type="evidence" value="ECO:0000250"/>
    <property type="project" value="UniProtKB"/>
</dbReference>
<dbReference type="CDD" id="cd13617">
    <property type="entry name" value="PBP2_transferrin_C"/>
    <property type="match status" value="1"/>
</dbReference>
<dbReference type="CDD" id="cd13618">
    <property type="entry name" value="PBP2_transferrin_N"/>
    <property type="match status" value="1"/>
</dbReference>
<dbReference type="FunFam" id="3.40.190.10:FF:000095">
    <property type="entry name" value="Lactotransferrin"/>
    <property type="match status" value="1"/>
</dbReference>
<dbReference type="FunFam" id="3.40.190.10:FF:000105">
    <property type="entry name" value="Serotransferrin"/>
    <property type="match status" value="1"/>
</dbReference>
<dbReference type="Gene3D" id="3.40.190.10">
    <property type="entry name" value="Periplasmic binding protein-like II"/>
    <property type="match status" value="4"/>
</dbReference>
<dbReference type="InterPro" id="IPR030684">
    <property type="entry name" value="Lactotransferrin"/>
</dbReference>
<dbReference type="InterPro" id="IPR016357">
    <property type="entry name" value="Transferrin"/>
</dbReference>
<dbReference type="InterPro" id="IPR001156">
    <property type="entry name" value="Transferrin-like_dom"/>
</dbReference>
<dbReference type="InterPro" id="IPR018195">
    <property type="entry name" value="Transferrin_Fe_BS"/>
</dbReference>
<dbReference type="PANTHER" id="PTHR11485:SF55">
    <property type="entry name" value="LACTOTRANSFERRIN"/>
    <property type="match status" value="1"/>
</dbReference>
<dbReference type="PANTHER" id="PTHR11485">
    <property type="entry name" value="TRANSFERRIN"/>
    <property type="match status" value="1"/>
</dbReference>
<dbReference type="Pfam" id="PF00405">
    <property type="entry name" value="Transferrin"/>
    <property type="match status" value="2"/>
</dbReference>
<dbReference type="PIRSF" id="PIRSF500683">
    <property type="entry name" value="Lactotransferrin"/>
    <property type="match status" value="1"/>
</dbReference>
<dbReference type="PIRSF" id="PIRSF002549">
    <property type="entry name" value="Transferrin"/>
    <property type="match status" value="1"/>
</dbReference>
<dbReference type="PRINTS" id="PR00422">
    <property type="entry name" value="TRANSFERRIN"/>
</dbReference>
<dbReference type="SMART" id="SM00094">
    <property type="entry name" value="TR_FER"/>
    <property type="match status" value="2"/>
</dbReference>
<dbReference type="SUPFAM" id="SSF53850">
    <property type="entry name" value="Periplasmic binding protein-like II"/>
    <property type="match status" value="2"/>
</dbReference>
<dbReference type="PROSITE" id="PS00205">
    <property type="entry name" value="TRANSFERRIN_LIKE_1"/>
    <property type="match status" value="2"/>
</dbReference>
<dbReference type="PROSITE" id="PS00206">
    <property type="entry name" value="TRANSFERRIN_LIKE_2"/>
    <property type="match status" value="2"/>
</dbReference>
<dbReference type="PROSITE" id="PS00207">
    <property type="entry name" value="TRANSFERRIN_LIKE_3"/>
    <property type="match status" value="2"/>
</dbReference>
<dbReference type="PROSITE" id="PS51408">
    <property type="entry name" value="TRANSFERRIN_LIKE_4"/>
    <property type="match status" value="2"/>
</dbReference>
<keyword id="KW-0002">3D-structure</keyword>
<keyword id="KW-1015">Disulfide bond</keyword>
<keyword id="KW-0325">Glycoprotein</keyword>
<keyword id="KW-0378">Hydrolase</keyword>
<keyword id="KW-0391">Immunity</keyword>
<keyword id="KW-0406">Ion transport</keyword>
<keyword id="KW-0408">Iron</keyword>
<keyword id="KW-0410">Iron transport</keyword>
<keyword id="KW-0479">Metal-binding</keyword>
<keyword id="KW-0892">Osteogenesis</keyword>
<keyword id="KW-0645">Protease</keyword>
<keyword id="KW-0677">Repeat</keyword>
<keyword id="KW-0964">Secreted</keyword>
<keyword id="KW-0720">Serine protease</keyword>
<keyword id="KW-0732">Signal</keyword>
<keyword id="KW-0813">Transport</keyword>
<protein>
    <recommendedName>
        <fullName>Lactotransferrin</fullName>
        <shortName>Lactoferrin</shortName>
        <ecNumber>3.4.21.-</ecNumber>
    </recommendedName>
</protein>
<comment type="function">
    <text evidence="2">Transferrins are iron binding transport proteins which can bind two Fe(3+) ions in association with the binding of an anion, usually bicarbonate.</text>
</comment>
<comment type="function">
    <molecule>Lactotransferrin</molecule>
    <text evidence="2">Major iron-binding and multifunctional protein found in exocrine fluids such as breast milk and mucosal secretions. Has antimicrobial activity, which depends on the extracellular cation concentration. Antimicrobial properties include bacteriostasis, which is related to its ability to sequester free iron and thus inhibit microbial growth, as well as direct bactericidal properties leading to the release of lipopolysaccharides from the bacterial outer membrane. Can also prevent bacterial biofilm development in P.aeruginosa infection. Has weak antifungal activity against C.albicans. Has anabolic, differentiating and anti-apoptotic effects on osteoblasts and can also inhibit osteoclastogenesis, possibly playing a role in the regulation of bone growth. Promotes binding of species C adenoviruses to epithelial cells, promoting adenovirus infection. Can inhibit papillomavirus infections. Stimulates the TLR4 signaling pathway leading to NF-kappa-B activation and subsequent pro-inflammatory cytokine production while also interfering with the lipopolysaccharide (LPS)-stimulated TLR4 signaling. Inhibits neutrophil granulocyte migration to sites of apoptosis, when secreted by apoptotic cells. Stimulates VEGFA-mediated endothelial cell migration and proliferation. Binds heparin, chondroitin sulfate and possibly other glycosaminoglycans (GAGs). Also binds specifically to pneumococcal surface protein A (PspA), the lipid A portion of bacterial lipopolysaccharide (LPS), lysozyme and DNA.</text>
</comment>
<comment type="function">
    <text evidence="2">Lactoferricin binds to the bacterial surface and is crucial for the bactericidal functions. Has some antiviral activity against papillomavirus infection. N-terminal region shows strong antifungal activity against C.albicans. Contains two BBXB heparin-binding consensus sequences that appear to form the predominate functional GAG-binding site.</text>
</comment>
<comment type="function">
    <text evidence="2">The lactotransferrin transferrin-like domain 1 functions as a serine protease of the peptidase S60 family that cuts arginine rich regions. This function contributes to the antimicrobial activity. Shows a preferential cleavage at -Arg-Ser-Arg-Arg-|- and -Arg-Arg-Ser-Arg-|-, and of Z-Phe-Arg-|-aminomethylcoumarin sites.</text>
</comment>
<comment type="subunit">
    <text evidence="2">Monomer. Found in a complex with LTF, CLU, EPPIN and SEMG1. Found in a complex with MPO and LTF; interacts directly with CP, allows Fe(3+) incorporation into LTF and activation of CP ferroxidase activity.</text>
</comment>
<comment type="subcellular location">
    <subcellularLocation>
        <location>Secreted</location>
    </subcellularLocation>
    <subcellularLocation>
        <location evidence="1">Cytoplasmic granule</location>
    </subcellularLocation>
    <text evidence="1">Secreted into most exocrine fluids by various endothelial cells. Stored in the secondary granules of neutrophils (By similarity).</text>
</comment>
<comment type="PTM">
    <text evidence="2">Poly-N-acetyllactosaminic carbohydrate moiety seems to be needed for TLR4 activation.</text>
</comment>
<comment type="similarity">
    <text evidence="5">Belongs to the transferrin family.</text>
</comment>
<name>TRFL_BUBBU</name>
<feature type="signal peptide" evidence="3">
    <location>
        <begin position="1"/>
        <end position="19"/>
    </location>
</feature>
<feature type="chain" id="PRO_0000035728" description="Lactotransferrin">
    <location>
        <begin position="20"/>
        <end position="708"/>
    </location>
</feature>
<feature type="domain" description="Transferrin-like 1" evidence="5">
    <location>
        <begin position="25"/>
        <end position="352"/>
    </location>
</feature>
<feature type="domain" description="Transferrin-like 2" evidence="5">
    <location>
        <begin position="364"/>
        <end position="693"/>
    </location>
</feature>
<feature type="active site" evidence="5">
    <location>
        <position position="92"/>
    </location>
</feature>
<feature type="active site" description="Nucleophile" evidence="5">
    <location>
        <position position="278"/>
    </location>
</feature>
<feature type="binding site" evidence="6 7 9 10">
    <location>
        <position position="79"/>
    </location>
    <ligand>
        <name>Fe cation</name>
        <dbReference type="ChEBI" id="CHEBI:24875"/>
        <label>1</label>
    </ligand>
</feature>
<feature type="binding site" evidence="6 7 9 10">
    <location>
        <position position="111"/>
    </location>
    <ligand>
        <name>Fe cation</name>
        <dbReference type="ChEBI" id="CHEBI:24875"/>
        <label>1</label>
    </ligand>
</feature>
<feature type="binding site" evidence="5 6 7">
    <location>
        <position position="136"/>
    </location>
    <ligand>
        <name>hydrogencarbonate</name>
        <dbReference type="ChEBI" id="CHEBI:17544"/>
        <label>1</label>
    </ligand>
</feature>
<feature type="binding site" evidence="5 6 7">
    <location>
        <position position="140"/>
    </location>
    <ligand>
        <name>hydrogencarbonate</name>
        <dbReference type="ChEBI" id="CHEBI:17544"/>
        <label>1</label>
    </ligand>
</feature>
<feature type="binding site" evidence="5 6 7">
    <location>
        <position position="142"/>
    </location>
    <ligand>
        <name>hydrogencarbonate</name>
        <dbReference type="ChEBI" id="CHEBI:17544"/>
        <label>1</label>
    </ligand>
</feature>
<feature type="binding site" evidence="5 6 7">
    <location>
        <position position="143"/>
    </location>
    <ligand>
        <name>hydrogencarbonate</name>
        <dbReference type="ChEBI" id="CHEBI:17544"/>
        <label>1</label>
    </ligand>
</feature>
<feature type="binding site" evidence="9 10">
    <location>
        <position position="211"/>
    </location>
    <ligand>
        <name>Fe cation</name>
        <dbReference type="ChEBI" id="CHEBI:24875"/>
        <label>1</label>
    </ligand>
</feature>
<feature type="binding site" evidence="6 7 9 10">
    <location>
        <position position="272"/>
    </location>
    <ligand>
        <name>Fe cation</name>
        <dbReference type="ChEBI" id="CHEBI:24875"/>
        <label>1</label>
    </ligand>
</feature>
<feature type="binding site" evidence="6 7 9 10">
    <location>
        <position position="414"/>
    </location>
    <ligand>
        <name>Fe cation</name>
        <dbReference type="ChEBI" id="CHEBI:24875"/>
        <label>2</label>
    </ligand>
</feature>
<feature type="binding site" evidence="6 7 9 10">
    <location>
        <position position="452"/>
    </location>
    <ligand>
        <name>Fe cation</name>
        <dbReference type="ChEBI" id="CHEBI:24875"/>
        <label>2</label>
    </ligand>
</feature>
<feature type="binding site" evidence="5 6 7">
    <location>
        <position position="478"/>
    </location>
    <ligand>
        <name>hydrogencarbonate</name>
        <dbReference type="ChEBI" id="CHEBI:17544"/>
        <label>2</label>
    </ligand>
</feature>
<feature type="binding site" evidence="5 6 7">
    <location>
        <position position="482"/>
    </location>
    <ligand>
        <name>hydrogencarbonate</name>
        <dbReference type="ChEBI" id="CHEBI:17544"/>
        <label>2</label>
    </ligand>
</feature>
<feature type="binding site" evidence="5 6 7">
    <location>
        <position position="484"/>
    </location>
    <ligand>
        <name>hydrogencarbonate</name>
        <dbReference type="ChEBI" id="CHEBI:17544"/>
        <label>2</label>
    </ligand>
</feature>
<feature type="binding site" evidence="5 6 7">
    <location>
        <position position="485"/>
    </location>
    <ligand>
        <name>hydrogencarbonate</name>
        <dbReference type="ChEBI" id="CHEBI:17544"/>
        <label>2</label>
    </ligand>
</feature>
<feature type="binding site" evidence="6 7 9 10">
    <location>
        <position position="545"/>
    </location>
    <ligand>
        <name>Fe cation</name>
        <dbReference type="ChEBI" id="CHEBI:24875"/>
        <label>2</label>
    </ligand>
</feature>
<feature type="binding site" evidence="6 7 9 10">
    <location>
        <position position="614"/>
    </location>
    <ligand>
        <name>Fe cation</name>
        <dbReference type="ChEBI" id="CHEBI:24875"/>
        <label>2</label>
    </ligand>
</feature>
<feature type="glycosylation site" description="N-linked (GlcNAc...) (high mannose) asparagine" evidence="4 8">
    <location>
        <position position="252"/>
    </location>
</feature>
<feature type="glycosylation site" description="N-linked (GlcNAc...) (hybrid) asparagine" evidence="4 8">
    <location>
        <position position="300"/>
    </location>
</feature>
<feature type="glycosylation site" description="N-linked (GlcNAc...) (complex) asparagine; alternate" evidence="4 8">
    <location>
        <position position="495"/>
    </location>
</feature>
<feature type="glycosylation site" description="N-linked (GlcNAc...) (high mannose) asparagine; alternate" evidence="4 8">
    <location>
        <position position="495"/>
    </location>
</feature>
<feature type="glycosylation site" description="N-linked (GlcNAc...) (hybrid) asparagine; alternate" evidence="4 8">
    <location>
        <position position="495"/>
    </location>
</feature>
<feature type="glycosylation site" description="N-linked (GlcNAc...) (high mannose) asparagine" evidence="4 8">
    <location>
        <position position="564"/>
    </location>
</feature>
<feature type="disulfide bond" evidence="6 7 9 10">
    <location>
        <begin position="28"/>
        <end position="64"/>
    </location>
</feature>
<feature type="disulfide bond" evidence="6 7 9 10">
    <location>
        <begin position="38"/>
        <end position="55"/>
    </location>
</feature>
<feature type="disulfide bond" evidence="6 7 9 10">
    <location>
        <begin position="134"/>
        <end position="217"/>
    </location>
</feature>
<feature type="disulfide bond" evidence="6 7 9 10">
    <location>
        <begin position="176"/>
        <end position="192"/>
    </location>
</feature>
<feature type="disulfide bond" evidence="6 7 9 10">
    <location>
        <begin position="179"/>
        <end position="202"/>
    </location>
</feature>
<feature type="disulfide bond" evidence="6 7 9 10">
    <location>
        <begin position="189"/>
        <end position="200"/>
    </location>
</feature>
<feature type="disulfide bond" evidence="6 7 9 10">
    <location>
        <begin position="250"/>
        <end position="264"/>
    </location>
</feature>
<feature type="disulfide bond" evidence="6 7 9 10">
    <location>
        <begin position="367"/>
        <end position="399"/>
    </location>
</feature>
<feature type="disulfide bond" evidence="6 7 9 10">
    <location>
        <begin position="377"/>
        <end position="390"/>
    </location>
</feature>
<feature type="disulfide bond" evidence="6 7 9 10">
    <location>
        <begin position="424"/>
        <end position="703"/>
    </location>
</feature>
<feature type="disulfide bond" evidence="6 7 9 10">
    <location>
        <begin position="444"/>
        <end position="666"/>
    </location>
</feature>
<feature type="disulfide bond" evidence="6 7 8 9 10">
    <location>
        <begin position="476"/>
        <end position="551"/>
    </location>
</feature>
<feature type="disulfide bond" evidence="6 7 9 10">
    <location>
        <begin position="500"/>
        <end position="694"/>
    </location>
</feature>
<feature type="disulfide bond" evidence="6 7 9 10">
    <location>
        <begin position="510"/>
        <end position="524"/>
    </location>
</feature>
<feature type="disulfide bond" evidence="6 7 9 10">
    <location>
        <begin position="521"/>
        <end position="534"/>
    </location>
</feature>
<feature type="disulfide bond" evidence="6 7 9 10">
    <location>
        <begin position="592"/>
        <end position="606"/>
    </location>
</feature>
<feature type="disulfide bond" evidence="6 7 9 10">
    <location>
        <begin position="644"/>
        <end position="649"/>
    </location>
</feature>
<feature type="sequence variant" evidence="8">
    <original>E</original>
    <variation>K</variation>
    <location>
        <position position="574"/>
    </location>
</feature>
<feature type="strand" evidence="12">
    <location>
        <begin position="23"/>
        <end position="31"/>
    </location>
</feature>
<feature type="helix" evidence="12">
    <location>
        <begin position="32"/>
        <end position="46"/>
    </location>
</feature>
<feature type="strand" evidence="12">
    <location>
        <begin position="53"/>
        <end position="57"/>
    </location>
</feature>
<feature type="helix" evidence="12">
    <location>
        <begin position="61"/>
        <end position="69"/>
    </location>
</feature>
<feature type="strand" evidence="12">
    <location>
        <begin position="75"/>
        <end position="78"/>
    </location>
</feature>
<feature type="helix" evidence="12">
    <location>
        <begin position="80"/>
        <end position="87"/>
    </location>
</feature>
<feature type="turn" evidence="12">
    <location>
        <begin position="89"/>
        <end position="91"/>
    </location>
</feature>
<feature type="strand" evidence="12">
    <location>
        <begin position="93"/>
        <end position="102"/>
    </location>
</feature>
<feature type="strand" evidence="12">
    <location>
        <begin position="104"/>
        <end position="118"/>
    </location>
</feature>
<feature type="helix" evidence="12">
    <location>
        <begin position="125"/>
        <end position="127"/>
    </location>
</feature>
<feature type="strand" evidence="12">
    <location>
        <begin position="132"/>
        <end position="136"/>
    </location>
</feature>
<feature type="turn" evidence="12">
    <location>
        <begin position="141"/>
        <end position="144"/>
    </location>
</feature>
<feature type="helix" evidence="12">
    <location>
        <begin position="145"/>
        <end position="150"/>
    </location>
</feature>
<feature type="helix" evidence="12">
    <location>
        <begin position="152"/>
        <end position="155"/>
    </location>
</feature>
<feature type="turn" evidence="12">
    <location>
        <begin position="159"/>
        <end position="161"/>
    </location>
</feature>
<feature type="helix" evidence="12">
    <location>
        <begin position="164"/>
        <end position="169"/>
    </location>
</feature>
<feature type="strand" evidence="12">
    <location>
        <begin position="172"/>
        <end position="176"/>
    </location>
</feature>
<feature type="turn" evidence="12">
    <location>
        <begin position="182"/>
        <end position="184"/>
    </location>
</feature>
<feature type="helix" evidence="12">
    <location>
        <begin position="186"/>
        <end position="189"/>
    </location>
</feature>
<feature type="helix" evidence="12">
    <location>
        <begin position="196"/>
        <end position="198"/>
    </location>
</feature>
<feature type="helix" evidence="12">
    <location>
        <begin position="211"/>
        <end position="219"/>
    </location>
</feature>
<feature type="strand" evidence="11">
    <location>
        <begin position="220"/>
        <end position="222"/>
    </location>
</feature>
<feature type="strand" evidence="12">
    <location>
        <begin position="224"/>
        <end position="229"/>
    </location>
</feature>
<feature type="helix" evidence="12">
    <location>
        <begin position="232"/>
        <end position="236"/>
    </location>
</feature>
<feature type="helix" evidence="12">
    <location>
        <begin position="240"/>
        <end position="243"/>
    </location>
</feature>
<feature type="strand" evidence="12">
    <location>
        <begin position="246"/>
        <end position="249"/>
    </location>
</feature>
<feature type="strand" evidence="12">
    <location>
        <begin position="255"/>
        <end position="257"/>
    </location>
</feature>
<feature type="helix" evidence="12">
    <location>
        <begin position="258"/>
        <end position="260"/>
    </location>
</feature>
<feature type="turn" evidence="12">
    <location>
        <begin position="261"/>
        <end position="263"/>
    </location>
</feature>
<feature type="strand" evidence="12">
    <location>
        <begin position="266"/>
        <end position="270"/>
    </location>
</feature>
<feature type="strand" evidence="12">
    <location>
        <begin position="273"/>
        <end position="280"/>
    </location>
</feature>
<feature type="helix" evidence="12">
    <location>
        <begin position="283"/>
        <end position="297"/>
    </location>
</feature>
<feature type="strand" evidence="12">
    <location>
        <begin position="303"/>
        <end position="305"/>
    </location>
</feature>
<feature type="strand" evidence="12">
    <location>
        <begin position="325"/>
        <end position="328"/>
    </location>
</feature>
<feature type="helix" evidence="12">
    <location>
        <begin position="335"/>
        <end position="351"/>
    </location>
</feature>
<feature type="helix" evidence="12">
    <location>
        <begin position="354"/>
        <end position="362"/>
    </location>
</feature>
<feature type="strand" evidence="12">
    <location>
        <begin position="363"/>
        <end position="370"/>
    </location>
</feature>
<feature type="helix" evidence="12">
    <location>
        <begin position="371"/>
        <end position="384"/>
    </location>
</feature>
<feature type="strand" evidence="12">
    <location>
        <begin position="386"/>
        <end position="395"/>
    </location>
</feature>
<feature type="helix" evidence="12">
    <location>
        <begin position="396"/>
        <end position="404"/>
    </location>
</feature>
<feature type="strand" evidence="12">
    <location>
        <begin position="410"/>
        <end position="413"/>
    </location>
</feature>
<feature type="helix" evidence="12">
    <location>
        <begin position="415"/>
        <end position="422"/>
    </location>
</feature>
<feature type="turn" evidence="12">
    <location>
        <begin position="423"/>
        <end position="425"/>
    </location>
</feature>
<feature type="strand" evidence="12">
    <location>
        <begin position="426"/>
        <end position="434"/>
    </location>
</feature>
<feature type="turn" evidence="12">
    <location>
        <begin position="438"/>
        <end position="441"/>
    </location>
</feature>
<feature type="turn" evidence="12">
    <location>
        <begin position="444"/>
        <end position="446"/>
    </location>
</feature>
<feature type="strand" evidence="12">
    <location>
        <begin position="452"/>
        <end position="459"/>
    </location>
</feature>
<feature type="helix" evidence="12">
    <location>
        <begin position="467"/>
        <end position="469"/>
    </location>
</feature>
<feature type="strand" evidence="12">
    <location>
        <begin position="474"/>
        <end position="478"/>
    </location>
</feature>
<feature type="turn" evidence="12">
    <location>
        <begin position="483"/>
        <end position="486"/>
    </location>
</feature>
<feature type="helix" evidence="12">
    <location>
        <begin position="487"/>
        <end position="497"/>
    </location>
</feature>
<feature type="turn" evidence="12">
    <location>
        <begin position="503"/>
        <end position="505"/>
    </location>
</feature>
<feature type="strand" evidence="12">
    <location>
        <begin position="506"/>
        <end position="510"/>
    </location>
</feature>
<feature type="turn" evidence="11">
    <location>
        <begin position="519"/>
        <end position="523"/>
    </location>
</feature>
<feature type="turn" evidence="11">
    <location>
        <begin position="536"/>
        <end position="539"/>
    </location>
</feature>
<feature type="helix" evidence="12">
    <location>
        <begin position="544"/>
        <end position="553"/>
    </location>
</feature>
<feature type="strand" evidence="12">
    <location>
        <begin position="556"/>
        <end position="563"/>
    </location>
</feature>
<feature type="helix" evidence="12">
    <location>
        <begin position="564"/>
        <end position="569"/>
    </location>
</feature>
<feature type="strand" evidence="12">
    <location>
        <begin position="571"/>
        <end position="575"/>
    </location>
</feature>
<feature type="helix" evidence="12">
    <location>
        <begin position="578"/>
        <end position="581"/>
    </location>
</feature>
<feature type="strand" evidence="12">
    <location>
        <begin position="587"/>
        <end position="591"/>
    </location>
</feature>
<feature type="strand" evidence="11">
    <location>
        <begin position="593"/>
        <end position="595"/>
    </location>
</feature>
<feature type="strand" evidence="12">
    <location>
        <begin position="597"/>
        <end position="599"/>
    </location>
</feature>
<feature type="helix" evidence="11">
    <location>
        <begin position="600"/>
        <end position="602"/>
    </location>
</feature>
<feature type="turn" evidence="12">
    <location>
        <begin position="603"/>
        <end position="605"/>
    </location>
</feature>
<feature type="strand" evidence="12">
    <location>
        <begin position="608"/>
        <end position="611"/>
    </location>
</feature>
<feature type="strand" evidence="12">
    <location>
        <begin position="615"/>
        <end position="619"/>
    </location>
</feature>
<feature type="helix" evidence="12">
    <location>
        <begin position="620"/>
        <end position="637"/>
    </location>
</feature>
<feature type="strand" evidence="11">
    <location>
        <begin position="638"/>
        <end position="640"/>
    </location>
</feature>
<feature type="turn" evidence="12">
    <location>
        <begin position="642"/>
        <end position="647"/>
    </location>
</feature>
<feature type="strand" evidence="11">
    <location>
        <begin position="654"/>
        <end position="656"/>
    </location>
</feature>
<feature type="strand" evidence="12">
    <location>
        <begin position="664"/>
        <end position="669"/>
    </location>
</feature>
<feature type="helix" evidence="12">
    <location>
        <begin position="676"/>
        <end position="680"/>
    </location>
</feature>
<feature type="helix" evidence="12">
    <location>
        <begin position="682"/>
        <end position="692"/>
    </location>
</feature>
<feature type="helix" evidence="12">
    <location>
        <begin position="698"/>
        <end position="705"/>
    </location>
</feature>
<proteinExistence type="evidence at protein level"/>
<evidence type="ECO:0000250" key="1"/>
<evidence type="ECO:0000250" key="2">
    <source>
        <dbReference type="UniProtKB" id="P02788"/>
    </source>
</evidence>
<evidence type="ECO:0000250" key="3">
    <source>
        <dbReference type="UniProtKB" id="P24627"/>
    </source>
</evidence>
<evidence type="ECO:0000255" key="4">
    <source>
        <dbReference type="PROSITE-ProRule" id="PRU00498"/>
    </source>
</evidence>
<evidence type="ECO:0000255" key="5">
    <source>
        <dbReference type="PROSITE-ProRule" id="PRU00741"/>
    </source>
</evidence>
<evidence type="ECO:0000269" key="6">
    <source>
    </source>
</evidence>
<evidence type="ECO:0000269" key="7">
    <source>
    </source>
</evidence>
<evidence type="ECO:0000269" key="8">
    <source ref="3"/>
</evidence>
<evidence type="ECO:0007744" key="9">
    <source>
        <dbReference type="PDB" id="1BIY"/>
    </source>
</evidence>
<evidence type="ECO:0007744" key="10">
    <source>
        <dbReference type="PDB" id="1CE2"/>
    </source>
</evidence>
<evidence type="ECO:0007829" key="11">
    <source>
        <dbReference type="PDB" id="1BIY"/>
    </source>
</evidence>
<evidence type="ECO:0007829" key="12">
    <source>
        <dbReference type="PDB" id="1CE2"/>
    </source>
</evidence>
<organism>
    <name type="scientific">Bubalus bubalis</name>
    <name type="common">Domestic water buffalo</name>
    <dbReference type="NCBI Taxonomy" id="89462"/>
    <lineage>
        <taxon>Eukaryota</taxon>
        <taxon>Metazoa</taxon>
        <taxon>Chordata</taxon>
        <taxon>Craniata</taxon>
        <taxon>Vertebrata</taxon>
        <taxon>Euteleostomi</taxon>
        <taxon>Mammalia</taxon>
        <taxon>Eutheria</taxon>
        <taxon>Laurasiatheria</taxon>
        <taxon>Artiodactyla</taxon>
        <taxon>Ruminantia</taxon>
        <taxon>Pecora</taxon>
        <taxon>Bovidae</taxon>
        <taxon>Bovinae</taxon>
        <taxon>Bubalus</taxon>
    </lineage>
</organism>
<reference evidence="9" key="1">
    <citation type="journal article" date="2000" name="Acta Crystallogr. D">
        <title>Structure of buffalo lactoferrin at 3.3 A resolution at 277 K.</title>
        <authorList>
            <person name="Karthikeyan S."/>
            <person name="Yadav S."/>
            <person name="Paramasivam M."/>
            <person name="Srinivasan A."/>
            <person name="Singh T.P."/>
        </authorList>
    </citation>
    <scope>NUCLEOTIDE SEQUENCE [MRNA]</scope>
    <scope>X-RAY CRYSTALLOGRAPHY (3.37 ANGSTROMS) OF 20-708 IN COMPLEX WITH IRON AND CARBONATE</scope>
    <scope>DISULFIDE BOND</scope>
    <source>
        <tissue>Mammary gland</tissue>
    </source>
</reference>
<reference key="2">
    <citation type="submission" date="1998-06" db="EMBL/GenBank/DDBJ databases">
        <title>cDNA sequence of Buffalo lactoferrin.</title>
        <authorList>
            <person name="Paramasivam M."/>
            <person name="Thattaliyath B.D."/>
            <person name="Kumar A."/>
            <person name="Srinivasan A."/>
            <person name="Singh T.P."/>
        </authorList>
    </citation>
    <scope>NUCLEOTIDE SEQUENCE [MRNA]</scope>
</reference>
<reference key="3">
    <citation type="journal article" date="2022" name="Int. Dairy J.">
        <title>N-glycoprofiling of lactoferrin with site-specificity from buffalo colostrum.</title>
        <authorList>
            <person name="Gnanesh Kumar B.S."/>
            <person name="Lijina P."/>
            <person name="Akshata S.H."/>
        </authorList>
    </citation>
    <scope>GLYCOSYLATION AT ASN-252; ASN-300; ASN-495 AND ASN-564</scope>
    <scope>VARIANT LYS-574</scope>
    <scope>DISULFIDE BONDS</scope>
    <scope>IDENTIFICATION BY MASS SPECTROMETRY</scope>
</reference>
<reference evidence="10" key="4">
    <citation type="journal article" date="1999" name="Acta Crystallogr. D">
        <title>Structure of buffalo lactoferrin at 2.5-A resolution using crystals grown at 303 K shows different orientations of the N and C lobes.</title>
        <authorList>
            <person name="Karthikeyan S."/>
            <person name="Paramasivam M."/>
            <person name="Yadav S."/>
            <person name="Srinivasan A."/>
            <person name="Singh T.P."/>
        </authorList>
    </citation>
    <scope>X-RAY CRYSTALLOGRAPHY (2.50 ANGSTROMS) OF 20-708 IN COMPLEX WITH IRON AND CARBONATE</scope>
    <scope>DISULFIDE BOND</scope>
</reference>
<sequence>MKLFVPALLSLGALGLCLAAPRKNVRWCTISQPEWLKCHRWQWRMKKLGAPSITCVRRAFVLECIRAITEKKADAVTLDGGMVFEAGLDPYKLRPVAAEIYGTKESPQTHYYAVAVVKKGSNFQLDQLQGRNSCHTGLGRSAGWNIPMGILRPYLSWTESLEPFQGAVAKFFSASCVPCVDRQAYPNLCQLCKGEGENQCACSPREPYFGYSGAFKCLQDGAGDVAFVKETTVFENLPEKADRDQYELLCLNNTRAPVDAFKECHLAQVPSHAVVARSVDGKEDLIWKLLSKAQEKFGKNKSGSFQLFGSPPGQRDLLFKDCALGFLRIPSKVDSALYLGSRYLTALKNLRETAEEVQARRARVVWCAVGPEEQKKCQQWSQQSGQIVTCATASTTDDCIALVLKGEADALSLDGGYIYTAGKCGLVPVLAENRKSSKHSSLDCVLRPTEGYLAVAVVKKANEGLTWNSLKGKKSCHTAVDRTAGWNIPMGLIANQTGSCAFDEFFSQSCAPGADPKSRLCALCAGDDQGLDKCVPNSKEKYYGYTGAFRCLAEDVGDVAFVKNDTVWENTNGESTADWAKNLNREDFRLLCLDGTRKPVTEAQSCHLAVAPNHAVVSLSERAAHVEQVLLHQQALFGENGKNCPDKFCLFKSETKNLLFNDNTECLAKLGGRPTYEEYLGTEYVTAIANLKKCSTSPLLEACAFLTR</sequence>
<accession>O77698</accession>
<gene>
    <name type="primary">LTF</name>
</gene>